<accession>Q7WH20</accession>
<reference key="1">
    <citation type="journal article" date="2003" name="Nat. Genet.">
        <title>Comparative analysis of the genome sequences of Bordetella pertussis, Bordetella parapertussis and Bordetella bronchiseptica.</title>
        <authorList>
            <person name="Parkhill J."/>
            <person name="Sebaihia M."/>
            <person name="Preston A."/>
            <person name="Murphy L.D."/>
            <person name="Thomson N.R."/>
            <person name="Harris D.E."/>
            <person name="Holden M.T.G."/>
            <person name="Churcher C.M."/>
            <person name="Bentley S.D."/>
            <person name="Mungall K.L."/>
            <person name="Cerdeno-Tarraga A.-M."/>
            <person name="Temple L."/>
            <person name="James K.D."/>
            <person name="Harris B."/>
            <person name="Quail M.A."/>
            <person name="Achtman M."/>
            <person name="Atkin R."/>
            <person name="Baker S."/>
            <person name="Basham D."/>
            <person name="Bason N."/>
            <person name="Cherevach I."/>
            <person name="Chillingworth T."/>
            <person name="Collins M."/>
            <person name="Cronin A."/>
            <person name="Davis P."/>
            <person name="Doggett J."/>
            <person name="Feltwell T."/>
            <person name="Goble A."/>
            <person name="Hamlin N."/>
            <person name="Hauser H."/>
            <person name="Holroyd S."/>
            <person name="Jagels K."/>
            <person name="Leather S."/>
            <person name="Moule S."/>
            <person name="Norberczak H."/>
            <person name="O'Neil S."/>
            <person name="Ormond D."/>
            <person name="Price C."/>
            <person name="Rabbinowitsch E."/>
            <person name="Rutter S."/>
            <person name="Sanders M."/>
            <person name="Saunders D."/>
            <person name="Seeger K."/>
            <person name="Sharp S."/>
            <person name="Simmonds M."/>
            <person name="Skelton J."/>
            <person name="Squares R."/>
            <person name="Squares S."/>
            <person name="Stevens K."/>
            <person name="Unwin L."/>
            <person name="Whitehead S."/>
            <person name="Barrell B.G."/>
            <person name="Maskell D.J."/>
        </authorList>
    </citation>
    <scope>NUCLEOTIDE SEQUENCE [LARGE SCALE GENOMIC DNA]</scope>
    <source>
        <strain>ATCC BAA-588 / NCTC 13252 / RB50</strain>
    </source>
</reference>
<name>MSBA_BORBR</name>
<organism>
    <name type="scientific">Bordetella bronchiseptica (strain ATCC BAA-588 / NCTC 13252 / RB50)</name>
    <name type="common">Alcaligenes bronchisepticus</name>
    <dbReference type="NCBI Taxonomy" id="257310"/>
    <lineage>
        <taxon>Bacteria</taxon>
        <taxon>Pseudomonadati</taxon>
        <taxon>Pseudomonadota</taxon>
        <taxon>Betaproteobacteria</taxon>
        <taxon>Burkholderiales</taxon>
        <taxon>Alcaligenaceae</taxon>
        <taxon>Bordetella</taxon>
    </lineage>
</organism>
<keyword id="KW-0067">ATP-binding</keyword>
<keyword id="KW-0997">Cell inner membrane</keyword>
<keyword id="KW-1003">Cell membrane</keyword>
<keyword id="KW-0445">Lipid transport</keyword>
<keyword id="KW-0472">Membrane</keyword>
<keyword id="KW-0547">Nucleotide-binding</keyword>
<keyword id="KW-1278">Translocase</keyword>
<keyword id="KW-0812">Transmembrane</keyword>
<keyword id="KW-1133">Transmembrane helix</keyword>
<keyword id="KW-0813">Transport</keyword>
<feature type="chain" id="PRO_0000092568" description="ATP-dependent lipid A-core flippase">
    <location>
        <begin position="1"/>
        <end position="623"/>
    </location>
</feature>
<feature type="transmembrane region" description="Helical" evidence="1">
    <location>
        <begin position="66"/>
        <end position="86"/>
    </location>
</feature>
<feature type="transmembrane region" description="Helical" evidence="1">
    <location>
        <begin position="103"/>
        <end position="123"/>
    </location>
</feature>
<feature type="transmembrane region" description="Helical" evidence="1">
    <location>
        <begin position="190"/>
        <end position="210"/>
    </location>
</feature>
<feature type="transmembrane region" description="Helical" evidence="1">
    <location>
        <begin position="290"/>
        <end position="310"/>
    </location>
</feature>
<feature type="transmembrane region" description="Helical" evidence="1">
    <location>
        <begin position="317"/>
        <end position="337"/>
    </location>
</feature>
<feature type="domain" description="ABC transmembrane type-1" evidence="1">
    <location>
        <begin position="67"/>
        <end position="349"/>
    </location>
</feature>
<feature type="domain" description="ABC transporter" evidence="1">
    <location>
        <begin position="382"/>
        <end position="618"/>
    </location>
</feature>
<feature type="binding site" evidence="1">
    <location>
        <begin position="416"/>
        <end position="423"/>
    </location>
    <ligand>
        <name>ATP</name>
        <dbReference type="ChEBI" id="CHEBI:30616"/>
    </ligand>
</feature>
<proteinExistence type="inferred from homology"/>
<sequence>MLAWRPGRPDGCRAAGGRRYNPGHDCIKASVSLNSAARNAPAGSQPVKAELWKRVYSRVGSYWKGLVLAVLLMAGAAATQPTLAVIMKPLLDDGFSGAKPHYVWFLPLAVVGLILLRGICNFFSDYLLAWVANNVLRGIRGEMFERLLGLPDADFKRGDTGRLLNRFTIDAGNVTGYATDVITVLVRETLVVIALIGVLLYMSWALTLIILVMLPVSVGIARAFTRRLRRINRETVNMNAELTRVVSEGIDGQRVIKLFDGYDAERRRFDFVNSRLRRFAMRSATADAALTPLTQVCISVAVGAVIAVALSQANSGALTVGSFASFMAALAQIFDPIKRLTNLAGKMQKMLVAAESVFTLVDQTPEADAGTRALPEPVRGKVEFRAVSHRFPDADRDTVSAVSFLVEPGQTVALVGRSGSGKTTLVNMLPRFVLPDGGDILFDDVPIQDLTLRSLRSHLSLVSQDVVLFDDTIAANVGYGAGGTVDDARVRDALAAANLLEFVDGLPLGIHTPVGQNAARLSGGQRQRLAIARALIKNAPVLILDEATSALDNESERQVQASLERLMRGRTTLVIAHRLSTVQNADRIIVLDAGKIVEHGPHSELLAANGLYASLYNMQFRED</sequence>
<gene>
    <name evidence="1" type="primary">msbA</name>
    <name type="ordered locus">BB3390</name>
</gene>
<dbReference type="EC" id="7.5.2.6" evidence="1"/>
<dbReference type="EMBL" id="BX640447">
    <property type="protein sequence ID" value="CAE33882.1"/>
    <property type="status" value="ALT_INIT"/>
    <property type="molecule type" value="Genomic_DNA"/>
</dbReference>
<dbReference type="SMR" id="Q7WH20"/>
<dbReference type="KEGG" id="bbr:BB3390"/>
<dbReference type="eggNOG" id="COG1132">
    <property type="taxonomic scope" value="Bacteria"/>
</dbReference>
<dbReference type="HOGENOM" id="CLU_000604_84_3_4"/>
<dbReference type="Proteomes" id="UP000001027">
    <property type="component" value="Chromosome"/>
</dbReference>
<dbReference type="GO" id="GO:0005886">
    <property type="term" value="C:plasma membrane"/>
    <property type="evidence" value="ECO:0007669"/>
    <property type="project" value="UniProtKB-SubCell"/>
</dbReference>
<dbReference type="GO" id="GO:0015421">
    <property type="term" value="F:ABC-type oligopeptide transporter activity"/>
    <property type="evidence" value="ECO:0007669"/>
    <property type="project" value="TreeGrafter"/>
</dbReference>
<dbReference type="GO" id="GO:0005524">
    <property type="term" value="F:ATP binding"/>
    <property type="evidence" value="ECO:0007669"/>
    <property type="project" value="UniProtKB-KW"/>
</dbReference>
<dbReference type="GO" id="GO:0016887">
    <property type="term" value="F:ATP hydrolysis activity"/>
    <property type="evidence" value="ECO:0007669"/>
    <property type="project" value="InterPro"/>
</dbReference>
<dbReference type="GO" id="GO:0034040">
    <property type="term" value="F:ATPase-coupled lipid transmembrane transporter activity"/>
    <property type="evidence" value="ECO:0007669"/>
    <property type="project" value="InterPro"/>
</dbReference>
<dbReference type="CDD" id="cd18552">
    <property type="entry name" value="ABC_6TM_MsbA_like"/>
    <property type="match status" value="1"/>
</dbReference>
<dbReference type="FunFam" id="3.40.50.300:FF:000221">
    <property type="entry name" value="Multidrug ABC transporter ATP-binding protein"/>
    <property type="match status" value="1"/>
</dbReference>
<dbReference type="Gene3D" id="1.20.1560.10">
    <property type="entry name" value="ABC transporter type 1, transmembrane domain"/>
    <property type="match status" value="1"/>
</dbReference>
<dbReference type="Gene3D" id="3.40.50.300">
    <property type="entry name" value="P-loop containing nucleotide triphosphate hydrolases"/>
    <property type="match status" value="1"/>
</dbReference>
<dbReference type="InterPro" id="IPR003593">
    <property type="entry name" value="AAA+_ATPase"/>
</dbReference>
<dbReference type="InterPro" id="IPR011527">
    <property type="entry name" value="ABC1_TM_dom"/>
</dbReference>
<dbReference type="InterPro" id="IPR036640">
    <property type="entry name" value="ABC1_TM_sf"/>
</dbReference>
<dbReference type="InterPro" id="IPR003439">
    <property type="entry name" value="ABC_transporter-like_ATP-bd"/>
</dbReference>
<dbReference type="InterPro" id="IPR017871">
    <property type="entry name" value="ABC_transporter-like_CS"/>
</dbReference>
<dbReference type="InterPro" id="IPR011917">
    <property type="entry name" value="ABC_transpr_lipidA"/>
</dbReference>
<dbReference type="InterPro" id="IPR027417">
    <property type="entry name" value="P-loop_NTPase"/>
</dbReference>
<dbReference type="InterPro" id="IPR039421">
    <property type="entry name" value="Type_1_exporter"/>
</dbReference>
<dbReference type="NCBIfam" id="TIGR02203">
    <property type="entry name" value="MsbA_lipidA"/>
    <property type="match status" value="1"/>
</dbReference>
<dbReference type="PANTHER" id="PTHR43394:SF1">
    <property type="entry name" value="ATP-BINDING CASSETTE SUB-FAMILY B MEMBER 10, MITOCHONDRIAL"/>
    <property type="match status" value="1"/>
</dbReference>
<dbReference type="PANTHER" id="PTHR43394">
    <property type="entry name" value="ATP-DEPENDENT PERMEASE MDL1, MITOCHONDRIAL"/>
    <property type="match status" value="1"/>
</dbReference>
<dbReference type="Pfam" id="PF00664">
    <property type="entry name" value="ABC_membrane"/>
    <property type="match status" value="1"/>
</dbReference>
<dbReference type="Pfam" id="PF00005">
    <property type="entry name" value="ABC_tran"/>
    <property type="match status" value="1"/>
</dbReference>
<dbReference type="SMART" id="SM00382">
    <property type="entry name" value="AAA"/>
    <property type="match status" value="1"/>
</dbReference>
<dbReference type="SUPFAM" id="SSF90123">
    <property type="entry name" value="ABC transporter transmembrane region"/>
    <property type="match status" value="1"/>
</dbReference>
<dbReference type="SUPFAM" id="SSF52540">
    <property type="entry name" value="P-loop containing nucleoside triphosphate hydrolases"/>
    <property type="match status" value="1"/>
</dbReference>
<dbReference type="PROSITE" id="PS50929">
    <property type="entry name" value="ABC_TM1F"/>
    <property type="match status" value="1"/>
</dbReference>
<dbReference type="PROSITE" id="PS00211">
    <property type="entry name" value="ABC_TRANSPORTER_1"/>
    <property type="match status" value="1"/>
</dbReference>
<dbReference type="PROSITE" id="PS50893">
    <property type="entry name" value="ABC_TRANSPORTER_2"/>
    <property type="match status" value="1"/>
</dbReference>
<dbReference type="PROSITE" id="PS51239">
    <property type="entry name" value="MSBA"/>
    <property type="match status" value="1"/>
</dbReference>
<comment type="function">
    <text evidence="1">Involved in lipopolysaccharide (LPS) biosynthesis. Translocates lipid A-core from the inner to the outer leaflet of the inner membrane. Transmembrane domains (TMD) form a pore in the inner membrane and the ATP-binding domain (NBD) is responsible for energy generation.</text>
</comment>
<comment type="catalytic activity">
    <reaction evidence="1">
        <text>ATP + H2O + lipid A-core oligosaccharideSide 1 = ADP + phosphate + lipid A-core oligosaccharideSide 2.</text>
        <dbReference type="EC" id="7.5.2.6"/>
    </reaction>
</comment>
<comment type="subunit">
    <text evidence="1">Homodimer.</text>
</comment>
<comment type="subcellular location">
    <subcellularLocation>
        <location evidence="1">Cell inner membrane</location>
        <topology evidence="1">Multi-pass membrane protein</topology>
    </subcellularLocation>
</comment>
<comment type="domain">
    <text evidence="1">In MsbA the ATP-binding domain (NBD) and the transmembrane domain (TMD) are fused.</text>
</comment>
<comment type="similarity">
    <text evidence="1">Belongs to the ABC transporter superfamily. Lipid exporter (TC 3.A.1.106) family.</text>
</comment>
<comment type="sequence caution" evidence="2">
    <conflict type="erroneous initiation">
        <sequence resource="EMBL-CDS" id="CAE33882"/>
    </conflict>
</comment>
<protein>
    <recommendedName>
        <fullName evidence="1">ATP-dependent lipid A-core flippase</fullName>
        <ecNumber evidence="1">7.5.2.6</ecNumber>
    </recommendedName>
    <alternativeName>
        <fullName evidence="1">Lipid A export ATP-binding/permease protein MsbA</fullName>
    </alternativeName>
</protein>
<evidence type="ECO:0000255" key="1">
    <source>
        <dbReference type="HAMAP-Rule" id="MF_01703"/>
    </source>
</evidence>
<evidence type="ECO:0000305" key="2"/>